<name>YNFC_SALPC</name>
<reference key="1">
    <citation type="journal article" date="2009" name="PLoS ONE">
        <title>Salmonella paratyphi C: genetic divergence from Salmonella choleraesuis and pathogenic convergence with Salmonella typhi.</title>
        <authorList>
            <person name="Liu W.-Q."/>
            <person name="Feng Y."/>
            <person name="Wang Y."/>
            <person name="Zou Q.-H."/>
            <person name="Chen F."/>
            <person name="Guo J.-T."/>
            <person name="Peng Y.-H."/>
            <person name="Jin Y."/>
            <person name="Li Y.-G."/>
            <person name="Hu S.-N."/>
            <person name="Johnston R.N."/>
            <person name="Liu G.-R."/>
            <person name="Liu S.-L."/>
        </authorList>
    </citation>
    <scope>NUCLEOTIDE SEQUENCE [LARGE SCALE GENOMIC DNA]</scope>
    <source>
        <strain>RKS4594</strain>
    </source>
</reference>
<proteinExistence type="inferred from homology"/>
<accession>C0Q4W6</accession>
<evidence type="ECO:0000255" key="1">
    <source>
        <dbReference type="HAMAP-Rule" id="MF_01065"/>
    </source>
</evidence>
<gene>
    <name evidence="1" type="primary">ynfC</name>
    <name type="ordered locus">SPC_2228</name>
</gene>
<dbReference type="EMBL" id="CP000857">
    <property type="protein sequence ID" value="ACN46349.1"/>
    <property type="molecule type" value="Genomic_DNA"/>
</dbReference>
<dbReference type="RefSeq" id="WP_000743115.1">
    <property type="nucleotide sequence ID" value="NC_012125.1"/>
</dbReference>
<dbReference type="KEGG" id="sei:SPC_2228"/>
<dbReference type="HOGENOM" id="CLU_1174761_0_0_6"/>
<dbReference type="Proteomes" id="UP000001599">
    <property type="component" value="Chromosome"/>
</dbReference>
<dbReference type="GO" id="GO:0005886">
    <property type="term" value="C:plasma membrane"/>
    <property type="evidence" value="ECO:0007669"/>
    <property type="project" value="UniProtKB-SubCell"/>
</dbReference>
<dbReference type="HAMAP" id="MF_01065">
    <property type="entry name" value="UPF0257"/>
    <property type="match status" value="1"/>
</dbReference>
<dbReference type="InterPro" id="IPR010646">
    <property type="entry name" value="UPF0257"/>
</dbReference>
<dbReference type="NCBIfam" id="NF002798">
    <property type="entry name" value="PRK02939.1"/>
    <property type="match status" value="1"/>
</dbReference>
<dbReference type="Pfam" id="PF06788">
    <property type="entry name" value="UPF0257"/>
    <property type="match status" value="1"/>
</dbReference>
<dbReference type="PROSITE" id="PS51257">
    <property type="entry name" value="PROKAR_LIPOPROTEIN"/>
    <property type="match status" value="1"/>
</dbReference>
<feature type="signal peptide" evidence="1">
    <location>
        <begin position="1"/>
        <end position="16"/>
    </location>
</feature>
<feature type="chain" id="PRO_1000149734" description="UPF0257 lipoprotein YnfC">
    <location>
        <begin position="17"/>
        <end position="236"/>
    </location>
</feature>
<feature type="lipid moiety-binding region" description="N-palmitoyl cysteine" evidence="1">
    <location>
        <position position="17"/>
    </location>
</feature>
<feature type="lipid moiety-binding region" description="S-diacylglycerol cysteine" evidence="1">
    <location>
        <position position="17"/>
    </location>
</feature>
<organism>
    <name type="scientific">Salmonella paratyphi C (strain RKS4594)</name>
    <dbReference type="NCBI Taxonomy" id="476213"/>
    <lineage>
        <taxon>Bacteria</taxon>
        <taxon>Pseudomonadati</taxon>
        <taxon>Pseudomonadota</taxon>
        <taxon>Gammaproteobacteria</taxon>
        <taxon>Enterobacterales</taxon>
        <taxon>Enterobacteriaceae</taxon>
        <taxon>Salmonella</taxon>
    </lineage>
</organism>
<keyword id="KW-1003">Cell membrane</keyword>
<keyword id="KW-0449">Lipoprotein</keyword>
<keyword id="KW-0472">Membrane</keyword>
<keyword id="KW-0564">Palmitate</keyword>
<keyword id="KW-0732">Signal</keyword>
<sequence length="236" mass="26260">MKKPLLLTLLCMILAGCDNPKSLESFTPEMASFSNEFDFDPLRGPVKDFSQTLMSENGEVAKQVTGTLSQEGCFDTLELHDLENNTELALVLDANYYRDAQTLEKKVQLQGKCQLAALPSAGVTWETDDNGFVVSATGKEMKVEYRYDSEGYPLGKTTINSQNTLSVTAKPSADPRKKLDYTAVSRVDDRQVGNVTLSCEYDAYANPVDCRLVIVDESVKPAVSHHYTIKNRIDYY</sequence>
<protein>
    <recommendedName>
        <fullName evidence="1">UPF0257 lipoprotein YnfC</fullName>
    </recommendedName>
</protein>
<comment type="subcellular location">
    <subcellularLocation>
        <location evidence="1">Cell membrane</location>
        <topology evidence="1">Lipid-anchor</topology>
    </subcellularLocation>
</comment>
<comment type="similarity">
    <text evidence="1">Belongs to the UPF0257 family.</text>
</comment>